<proteinExistence type="inferred from homology"/>
<organism>
    <name type="scientific">Sphingopyxis alaskensis (strain DSM 13593 / LMG 18877 / RB2256)</name>
    <name type="common">Sphingomonas alaskensis</name>
    <dbReference type="NCBI Taxonomy" id="317655"/>
    <lineage>
        <taxon>Bacteria</taxon>
        <taxon>Pseudomonadati</taxon>
        <taxon>Pseudomonadota</taxon>
        <taxon>Alphaproteobacteria</taxon>
        <taxon>Sphingomonadales</taxon>
        <taxon>Sphingomonadaceae</taxon>
        <taxon>Sphingopyxis</taxon>
    </lineage>
</organism>
<accession>Q1GT67</accession>
<keyword id="KW-0488">Methylation</keyword>
<keyword id="KW-1185">Reference proteome</keyword>
<keyword id="KW-0687">Ribonucleoprotein</keyword>
<keyword id="KW-0689">Ribosomal protein</keyword>
<keyword id="KW-0694">RNA-binding</keyword>
<keyword id="KW-0699">rRNA-binding</keyword>
<gene>
    <name evidence="1" type="primary">rplK</name>
    <name type="ordered locus">Sala_1442</name>
</gene>
<comment type="function">
    <text evidence="1">Forms part of the ribosomal stalk which helps the ribosome interact with GTP-bound translation factors.</text>
</comment>
<comment type="subunit">
    <text evidence="1">Part of the ribosomal stalk of the 50S ribosomal subunit. Interacts with L10 and the large rRNA to form the base of the stalk. L10 forms an elongated spine to which L12 dimers bind in a sequential fashion forming a multimeric L10(L12)X complex.</text>
</comment>
<comment type="PTM">
    <text evidence="1">One or more lysine residues are methylated.</text>
</comment>
<comment type="similarity">
    <text evidence="1">Belongs to the universal ribosomal protein uL11 family.</text>
</comment>
<name>RL11_SPHAL</name>
<sequence>MAKKISGYIKLQVPAGTANPSPPLGPALGQRGVNIMEFCKAFNAATDGLEKGTPTPTIITVYADKSFSFVTKTPPATYLIKKAANLKSGSKEPGKISGGKIARSKLAEIAEIKMKDLNANDIEQATKIIEGSARSMGLEVTEG</sequence>
<evidence type="ECO:0000255" key="1">
    <source>
        <dbReference type="HAMAP-Rule" id="MF_00736"/>
    </source>
</evidence>
<evidence type="ECO:0000305" key="2"/>
<protein>
    <recommendedName>
        <fullName evidence="1">Large ribosomal subunit protein uL11</fullName>
    </recommendedName>
    <alternativeName>
        <fullName evidence="2">50S ribosomal protein L11</fullName>
    </alternativeName>
</protein>
<feature type="chain" id="PRO_0000258217" description="Large ribosomal subunit protein uL11">
    <location>
        <begin position="1"/>
        <end position="143"/>
    </location>
</feature>
<reference key="1">
    <citation type="journal article" date="2009" name="Proc. Natl. Acad. Sci. U.S.A.">
        <title>The genomic basis of trophic strategy in marine bacteria.</title>
        <authorList>
            <person name="Lauro F.M."/>
            <person name="McDougald D."/>
            <person name="Thomas T."/>
            <person name="Williams T.J."/>
            <person name="Egan S."/>
            <person name="Rice S."/>
            <person name="DeMaere M.Z."/>
            <person name="Ting L."/>
            <person name="Ertan H."/>
            <person name="Johnson J."/>
            <person name="Ferriera S."/>
            <person name="Lapidus A."/>
            <person name="Anderson I."/>
            <person name="Kyrpides N."/>
            <person name="Munk A.C."/>
            <person name="Detter C."/>
            <person name="Han C.S."/>
            <person name="Brown M.V."/>
            <person name="Robb F.T."/>
            <person name="Kjelleberg S."/>
            <person name="Cavicchioli R."/>
        </authorList>
    </citation>
    <scope>NUCLEOTIDE SEQUENCE [LARGE SCALE GENOMIC DNA]</scope>
    <source>
        <strain>DSM 13593 / LMG 18877 / RB2256</strain>
    </source>
</reference>
<dbReference type="EMBL" id="CP000356">
    <property type="protein sequence ID" value="ABF53155.1"/>
    <property type="molecule type" value="Genomic_DNA"/>
</dbReference>
<dbReference type="RefSeq" id="WP_011541735.1">
    <property type="nucleotide sequence ID" value="NC_008048.1"/>
</dbReference>
<dbReference type="SMR" id="Q1GT67"/>
<dbReference type="STRING" id="317655.Sala_1442"/>
<dbReference type="KEGG" id="sal:Sala_1442"/>
<dbReference type="eggNOG" id="COG0080">
    <property type="taxonomic scope" value="Bacteria"/>
</dbReference>
<dbReference type="HOGENOM" id="CLU_074237_2_0_5"/>
<dbReference type="OrthoDB" id="9802408at2"/>
<dbReference type="Proteomes" id="UP000006578">
    <property type="component" value="Chromosome"/>
</dbReference>
<dbReference type="GO" id="GO:0022625">
    <property type="term" value="C:cytosolic large ribosomal subunit"/>
    <property type="evidence" value="ECO:0007669"/>
    <property type="project" value="TreeGrafter"/>
</dbReference>
<dbReference type="GO" id="GO:0070180">
    <property type="term" value="F:large ribosomal subunit rRNA binding"/>
    <property type="evidence" value="ECO:0007669"/>
    <property type="project" value="UniProtKB-UniRule"/>
</dbReference>
<dbReference type="GO" id="GO:0003735">
    <property type="term" value="F:structural constituent of ribosome"/>
    <property type="evidence" value="ECO:0007669"/>
    <property type="project" value="InterPro"/>
</dbReference>
<dbReference type="GO" id="GO:0006412">
    <property type="term" value="P:translation"/>
    <property type="evidence" value="ECO:0007669"/>
    <property type="project" value="UniProtKB-UniRule"/>
</dbReference>
<dbReference type="CDD" id="cd00349">
    <property type="entry name" value="Ribosomal_L11"/>
    <property type="match status" value="1"/>
</dbReference>
<dbReference type="FunFam" id="1.10.10.250:FF:000001">
    <property type="entry name" value="50S ribosomal protein L11"/>
    <property type="match status" value="1"/>
</dbReference>
<dbReference type="FunFam" id="3.30.1550.10:FF:000013">
    <property type="entry name" value="50S ribosomal protein L11"/>
    <property type="match status" value="1"/>
</dbReference>
<dbReference type="Gene3D" id="1.10.10.250">
    <property type="entry name" value="Ribosomal protein L11, C-terminal domain"/>
    <property type="match status" value="1"/>
</dbReference>
<dbReference type="Gene3D" id="3.30.1550.10">
    <property type="entry name" value="Ribosomal protein L11/L12, N-terminal domain"/>
    <property type="match status" value="1"/>
</dbReference>
<dbReference type="HAMAP" id="MF_00736">
    <property type="entry name" value="Ribosomal_uL11"/>
    <property type="match status" value="1"/>
</dbReference>
<dbReference type="InterPro" id="IPR000911">
    <property type="entry name" value="Ribosomal_uL11"/>
</dbReference>
<dbReference type="InterPro" id="IPR006519">
    <property type="entry name" value="Ribosomal_uL11_bac-typ"/>
</dbReference>
<dbReference type="InterPro" id="IPR020783">
    <property type="entry name" value="Ribosomal_uL11_C"/>
</dbReference>
<dbReference type="InterPro" id="IPR036769">
    <property type="entry name" value="Ribosomal_uL11_C_sf"/>
</dbReference>
<dbReference type="InterPro" id="IPR020785">
    <property type="entry name" value="Ribosomal_uL11_CS"/>
</dbReference>
<dbReference type="InterPro" id="IPR020784">
    <property type="entry name" value="Ribosomal_uL11_N"/>
</dbReference>
<dbReference type="InterPro" id="IPR036796">
    <property type="entry name" value="Ribosomal_uL11_N_sf"/>
</dbReference>
<dbReference type="NCBIfam" id="TIGR01632">
    <property type="entry name" value="L11_bact"/>
    <property type="match status" value="1"/>
</dbReference>
<dbReference type="PANTHER" id="PTHR11661">
    <property type="entry name" value="60S RIBOSOMAL PROTEIN L12"/>
    <property type="match status" value="1"/>
</dbReference>
<dbReference type="PANTHER" id="PTHR11661:SF1">
    <property type="entry name" value="LARGE RIBOSOMAL SUBUNIT PROTEIN UL11M"/>
    <property type="match status" value="1"/>
</dbReference>
<dbReference type="Pfam" id="PF00298">
    <property type="entry name" value="Ribosomal_L11"/>
    <property type="match status" value="1"/>
</dbReference>
<dbReference type="Pfam" id="PF03946">
    <property type="entry name" value="Ribosomal_L11_N"/>
    <property type="match status" value="1"/>
</dbReference>
<dbReference type="SMART" id="SM00649">
    <property type="entry name" value="RL11"/>
    <property type="match status" value="1"/>
</dbReference>
<dbReference type="SUPFAM" id="SSF54747">
    <property type="entry name" value="Ribosomal L11/L12e N-terminal domain"/>
    <property type="match status" value="1"/>
</dbReference>
<dbReference type="SUPFAM" id="SSF46906">
    <property type="entry name" value="Ribosomal protein L11, C-terminal domain"/>
    <property type="match status" value="1"/>
</dbReference>
<dbReference type="PROSITE" id="PS00359">
    <property type="entry name" value="RIBOSOMAL_L11"/>
    <property type="match status" value="1"/>
</dbReference>